<accession>Q881J7</accession>
<dbReference type="EC" id="2.7.13.3"/>
<dbReference type="EMBL" id="AE016853">
    <property type="protein sequence ID" value="AAO56389.1"/>
    <property type="molecule type" value="Genomic_DNA"/>
</dbReference>
<dbReference type="RefSeq" id="NP_792694.1">
    <property type="nucleotide sequence ID" value="NC_004578.1"/>
</dbReference>
<dbReference type="RefSeq" id="WP_007243883.1">
    <property type="nucleotide sequence ID" value="NC_004578.1"/>
</dbReference>
<dbReference type="SMR" id="Q881J7"/>
<dbReference type="STRING" id="223283.PSPTO_2896"/>
<dbReference type="GeneID" id="1184550"/>
<dbReference type="KEGG" id="pst:PSPTO_2896"/>
<dbReference type="PATRIC" id="fig|223283.9.peg.2955"/>
<dbReference type="eggNOG" id="COG0784">
    <property type="taxonomic scope" value="Bacteria"/>
</dbReference>
<dbReference type="eggNOG" id="COG4191">
    <property type="taxonomic scope" value="Bacteria"/>
</dbReference>
<dbReference type="HOGENOM" id="CLU_000445_114_51_6"/>
<dbReference type="OrthoDB" id="9772100at2"/>
<dbReference type="PhylomeDB" id="Q881J7"/>
<dbReference type="PHI-base" id="PHI:3796"/>
<dbReference type="Proteomes" id="UP000002515">
    <property type="component" value="Chromosome"/>
</dbReference>
<dbReference type="GO" id="GO:0005524">
    <property type="term" value="F:ATP binding"/>
    <property type="evidence" value="ECO:0007669"/>
    <property type="project" value="UniProtKB-KW"/>
</dbReference>
<dbReference type="GO" id="GO:0000155">
    <property type="term" value="F:phosphorelay sensor kinase activity"/>
    <property type="evidence" value="ECO:0007669"/>
    <property type="project" value="InterPro"/>
</dbReference>
<dbReference type="GO" id="GO:0009881">
    <property type="term" value="F:photoreceptor activity"/>
    <property type="evidence" value="ECO:0007669"/>
    <property type="project" value="UniProtKB-KW"/>
</dbReference>
<dbReference type="CDD" id="cd00082">
    <property type="entry name" value="HisKA"/>
    <property type="match status" value="1"/>
</dbReference>
<dbReference type="CDD" id="cd00130">
    <property type="entry name" value="PAS"/>
    <property type="match status" value="1"/>
</dbReference>
<dbReference type="CDD" id="cd18161">
    <property type="entry name" value="REC_hyHK_blue-like"/>
    <property type="match status" value="1"/>
</dbReference>
<dbReference type="Gene3D" id="1.10.287.130">
    <property type="match status" value="1"/>
</dbReference>
<dbReference type="Gene3D" id="3.40.50.2300">
    <property type="match status" value="1"/>
</dbReference>
<dbReference type="Gene3D" id="3.30.565.10">
    <property type="entry name" value="Histidine kinase-like ATPase, C-terminal domain"/>
    <property type="match status" value="1"/>
</dbReference>
<dbReference type="Gene3D" id="3.30.450.20">
    <property type="entry name" value="PAS domain"/>
    <property type="match status" value="1"/>
</dbReference>
<dbReference type="InterPro" id="IPR011006">
    <property type="entry name" value="CheY-like_superfamily"/>
</dbReference>
<dbReference type="InterPro" id="IPR036890">
    <property type="entry name" value="HATPase_C_sf"/>
</dbReference>
<dbReference type="InterPro" id="IPR005467">
    <property type="entry name" value="His_kinase_dom"/>
</dbReference>
<dbReference type="InterPro" id="IPR003661">
    <property type="entry name" value="HisK_dim/P_dom"/>
</dbReference>
<dbReference type="InterPro" id="IPR036097">
    <property type="entry name" value="HisK_dim/P_sf"/>
</dbReference>
<dbReference type="InterPro" id="IPR001610">
    <property type="entry name" value="PAC"/>
</dbReference>
<dbReference type="InterPro" id="IPR000014">
    <property type="entry name" value="PAS"/>
</dbReference>
<dbReference type="InterPro" id="IPR000700">
    <property type="entry name" value="PAS-assoc_C"/>
</dbReference>
<dbReference type="InterPro" id="IPR035965">
    <property type="entry name" value="PAS-like_dom_sf"/>
</dbReference>
<dbReference type="InterPro" id="IPR004358">
    <property type="entry name" value="Sig_transdc_His_kin-like_C"/>
</dbReference>
<dbReference type="InterPro" id="IPR001789">
    <property type="entry name" value="Sig_transdc_resp-reg_receiver"/>
</dbReference>
<dbReference type="NCBIfam" id="NF010076">
    <property type="entry name" value="PRK13557.1"/>
    <property type="match status" value="1"/>
</dbReference>
<dbReference type="NCBIfam" id="TIGR00229">
    <property type="entry name" value="sensory_box"/>
    <property type="match status" value="1"/>
</dbReference>
<dbReference type="PANTHER" id="PTHR43065">
    <property type="entry name" value="SENSOR HISTIDINE KINASE"/>
    <property type="match status" value="1"/>
</dbReference>
<dbReference type="PANTHER" id="PTHR43065:SF42">
    <property type="entry name" value="TWO-COMPONENT SENSOR PPRA"/>
    <property type="match status" value="1"/>
</dbReference>
<dbReference type="Pfam" id="PF02518">
    <property type="entry name" value="HATPase_c"/>
    <property type="match status" value="1"/>
</dbReference>
<dbReference type="Pfam" id="PF13426">
    <property type="entry name" value="PAS_9"/>
    <property type="match status" value="1"/>
</dbReference>
<dbReference type="Pfam" id="PF00072">
    <property type="entry name" value="Response_reg"/>
    <property type="match status" value="1"/>
</dbReference>
<dbReference type="PRINTS" id="PR00344">
    <property type="entry name" value="BCTRLSENSOR"/>
</dbReference>
<dbReference type="SMART" id="SM00387">
    <property type="entry name" value="HATPase_c"/>
    <property type="match status" value="1"/>
</dbReference>
<dbReference type="SMART" id="SM00388">
    <property type="entry name" value="HisKA"/>
    <property type="match status" value="1"/>
</dbReference>
<dbReference type="SMART" id="SM00086">
    <property type="entry name" value="PAC"/>
    <property type="match status" value="1"/>
</dbReference>
<dbReference type="SMART" id="SM00091">
    <property type="entry name" value="PAS"/>
    <property type="match status" value="1"/>
</dbReference>
<dbReference type="SMART" id="SM00448">
    <property type="entry name" value="REC"/>
    <property type="match status" value="1"/>
</dbReference>
<dbReference type="SUPFAM" id="SSF55874">
    <property type="entry name" value="ATPase domain of HSP90 chaperone/DNA topoisomerase II/histidine kinase"/>
    <property type="match status" value="1"/>
</dbReference>
<dbReference type="SUPFAM" id="SSF52172">
    <property type="entry name" value="CheY-like"/>
    <property type="match status" value="1"/>
</dbReference>
<dbReference type="SUPFAM" id="SSF47384">
    <property type="entry name" value="Homodimeric domain of signal transducing histidine kinase"/>
    <property type="match status" value="1"/>
</dbReference>
<dbReference type="SUPFAM" id="SSF55785">
    <property type="entry name" value="PYP-like sensor domain (PAS domain)"/>
    <property type="match status" value="1"/>
</dbReference>
<dbReference type="PROSITE" id="PS50109">
    <property type="entry name" value="HIS_KIN"/>
    <property type="match status" value="1"/>
</dbReference>
<dbReference type="PROSITE" id="PS50113">
    <property type="entry name" value="PAC"/>
    <property type="match status" value="1"/>
</dbReference>
<dbReference type="PROSITE" id="PS50112">
    <property type="entry name" value="PAS"/>
    <property type="match status" value="1"/>
</dbReference>
<dbReference type="PROSITE" id="PS50110">
    <property type="entry name" value="RESPONSE_REGULATORY"/>
    <property type="match status" value="1"/>
</dbReference>
<reference key="1">
    <citation type="journal article" date="2003" name="Proc. Natl. Acad. Sci. U.S.A.">
        <title>The complete genome sequence of the Arabidopsis and tomato pathogen Pseudomonas syringae pv. tomato DC3000.</title>
        <authorList>
            <person name="Buell C.R."/>
            <person name="Joardar V."/>
            <person name="Lindeberg M."/>
            <person name="Selengut J."/>
            <person name="Paulsen I.T."/>
            <person name="Gwinn M.L."/>
            <person name="Dodson R.J."/>
            <person name="DeBoy R.T."/>
            <person name="Durkin A.S."/>
            <person name="Kolonay J.F."/>
            <person name="Madupu R."/>
            <person name="Daugherty S.C."/>
            <person name="Brinkac L.M."/>
            <person name="Beanan M.J."/>
            <person name="Haft D.H."/>
            <person name="Nelson W.C."/>
            <person name="Davidsen T.M."/>
            <person name="Zafar N."/>
            <person name="Zhou L."/>
            <person name="Liu J."/>
            <person name="Yuan Q."/>
            <person name="Khouri H.M."/>
            <person name="Fedorova N.B."/>
            <person name="Tran B."/>
            <person name="Russell D."/>
            <person name="Berry K.J."/>
            <person name="Utterback T.R."/>
            <person name="Van Aken S.E."/>
            <person name="Feldblyum T.V."/>
            <person name="D'Ascenzo M."/>
            <person name="Deng W.-L."/>
            <person name="Ramos A.R."/>
            <person name="Alfano J.R."/>
            <person name="Cartinhour S."/>
            <person name="Chatterjee A.K."/>
            <person name="Delaney T.P."/>
            <person name="Lazarowitz S.G."/>
            <person name="Martin G.B."/>
            <person name="Schneider D.J."/>
            <person name="Tang X."/>
            <person name="Bender C.L."/>
            <person name="White O."/>
            <person name="Fraser C.M."/>
            <person name="Collmer A."/>
        </authorList>
    </citation>
    <scope>NUCLEOTIDE SEQUENCE [LARGE SCALE GENOMIC DNA]</scope>
    <source>
        <strain>ATCC BAA-871 / DC3000</strain>
    </source>
</reference>
<reference key="2">
    <citation type="journal article" date="2007" name="Science">
        <title>Blue-light-activated histidine kinases: two-component sensors in bacteria.</title>
        <authorList>
            <person name="Swartz T.E."/>
            <person name="Tseng T.-S."/>
            <person name="Frederickson M.A."/>
            <person name="Paris G."/>
            <person name="Comerci D.J."/>
            <person name="Rajashekara G."/>
            <person name="Kim J.-G."/>
            <person name="Mudgett M.B."/>
            <person name="Splitter G.A."/>
            <person name="Ugalde R.A."/>
            <person name="Goldbaum F.A."/>
            <person name="Briggs W.R."/>
            <person name="Bogomolni R.A."/>
        </authorList>
    </citation>
    <scope>FUNCTION IN LIGHT SENSING</scope>
    <scope>FLAVIN CHROMOPHORE</scope>
    <scope>KINASE ACTIVITY</scope>
    <scope>INDUCTION</scope>
    <scope>ROLE IN VIRULENCE</scope>
    <source>
        <strain>ATCC BAA-871 / DC3000</strain>
    </source>
</reference>
<gene>
    <name type="ordered locus">PSPTO_2896</name>
</gene>
<sequence length="534" mass="58935">MSENKTRVDNAATGDIQHQGKDIFFAAVETTRMPMIVTDPNRPDNPIIFSNRAFLEMTGYTAEEILGTNCRFLQGPDTDPAVVQSIRDAIAQRNDISAEIINYRKDGSSFWNALFISPVYNDAGDLIYFFASQLDISRRKDAEEALRQAQKMEALGQLTGGIAHDFNNLLQVMGGYIDLIGSAAEKPVIDVQRVQRSVYHAKSAVERASTLTKQLLAFARKQKLQGRVLNLNGLVSIVEPLIERTFGPEVAIETDLEPALKNCRIDPTQAEVALLNIFINARDALIGRENPKVFIETRNLLVDELANMSYDGLLPGRYVSIAVTDNGIGMPASIRDRVMDPFFTTKEEGKGSGLGLSMVYGFAKQSGGAARIYTEEGVGTTLRLYFPVDEAGLTNTESPQASDRRLGSSERILIVEDRPDVAELAKMVLDDYGYVSEIVLNAREALKKFESGNMYDLLFTDLIMPGGMNGVMLAREVRRRYPKVKVLLTTGYAESSIERTDIGGSEFDVVSKPCMPHDLARKVRQVLDGPNGIA</sequence>
<evidence type="ECO:0000255" key="1">
    <source>
        <dbReference type="PROSITE-ProRule" id="PRU00107"/>
    </source>
</evidence>
<evidence type="ECO:0000255" key="2">
    <source>
        <dbReference type="PROSITE-ProRule" id="PRU00140"/>
    </source>
</evidence>
<evidence type="ECO:0000255" key="3">
    <source>
        <dbReference type="PROSITE-ProRule" id="PRU00141"/>
    </source>
</evidence>
<evidence type="ECO:0000255" key="4">
    <source>
        <dbReference type="PROSITE-ProRule" id="PRU00169"/>
    </source>
</evidence>
<evidence type="ECO:0000269" key="5">
    <source>
    </source>
</evidence>
<organism>
    <name type="scientific">Pseudomonas syringae pv. tomato (strain ATCC BAA-871 / DC3000)</name>
    <dbReference type="NCBI Taxonomy" id="223283"/>
    <lineage>
        <taxon>Bacteria</taxon>
        <taxon>Pseudomonadati</taxon>
        <taxon>Pseudomonadota</taxon>
        <taxon>Gammaproteobacteria</taxon>
        <taxon>Pseudomonadales</taxon>
        <taxon>Pseudomonadaceae</taxon>
        <taxon>Pseudomonas</taxon>
    </lineage>
</organism>
<name>LOVHK_PSESM</name>
<feature type="chain" id="PRO_0000361293" description="Blue-light-activated protein">
    <location>
        <begin position="1"/>
        <end position="534"/>
    </location>
</feature>
<feature type="domain" description="PAS" evidence="2">
    <location>
        <begin position="20"/>
        <end position="93"/>
    </location>
</feature>
<feature type="domain" description="PAC" evidence="3">
    <location>
        <begin position="94"/>
        <end position="148"/>
    </location>
</feature>
<feature type="domain" description="Histidine kinase" evidence="1">
    <location>
        <begin position="161"/>
        <end position="390"/>
    </location>
</feature>
<feature type="domain" description="Response regulatory" evidence="4">
    <location>
        <begin position="411"/>
        <end position="527"/>
    </location>
</feature>
<feature type="modified residue" description="S-4a-FMN cysteine">
    <location>
        <position position="70"/>
    </location>
</feature>
<feature type="modified residue" description="Phosphohistidine; by autocatalysis" evidence="1">
    <location>
        <position position="164"/>
    </location>
</feature>
<feature type="modified residue" description="4-aspartylphosphate" evidence="4">
    <location>
        <position position="461"/>
    </location>
</feature>
<protein>
    <recommendedName>
        <fullName>Blue-light-activated protein</fullName>
    </recommendedName>
    <domain>
        <recommendedName>
            <fullName>Blue-light-activated histidine kinase</fullName>
            <ecNumber>2.7.13.3</ecNumber>
        </recommendedName>
        <alternativeName>
            <fullName>PS-LOV-histidine kinase</fullName>
            <shortName>PS-LOV-HK</shortName>
        </alternativeName>
    </domain>
    <domain>
        <recommendedName>
            <fullName>Response regulator</fullName>
        </recommendedName>
    </domain>
</protein>
<comment type="function">
    <text evidence="5">Photosensitive kinase and response regulator that is involved in increased bacterial virulence upon exposure to light.</text>
</comment>
<comment type="catalytic activity">
    <reaction>
        <text>ATP + protein L-histidine = ADP + protein N-phospho-L-histidine.</text>
        <dbReference type="EC" id="2.7.13.3"/>
    </reaction>
</comment>
<comment type="induction">
    <text evidence="5">Constitutively expressed when grown in minimal media.</text>
</comment>
<comment type="PTM">
    <text>FMN binds covalently to cysteine after exposure to blue light and this bond is spontaneously broken in the dark.</text>
</comment>
<comment type="miscellaneous">
    <text>Treatment of phosphorylated protein with alkaline buffer to hydrolyze phospho-aspartates does not significantly reduce phosphorylation in assays performed in vitro. Therefore, it is not clear whether Asp-461 is really phosphorylated by His-164.</text>
</comment>
<keyword id="KW-0067">ATP-binding</keyword>
<keyword id="KW-0157">Chromophore</keyword>
<keyword id="KW-0285">Flavoprotein</keyword>
<keyword id="KW-0288">FMN</keyword>
<keyword id="KW-0418">Kinase</keyword>
<keyword id="KW-0547">Nucleotide-binding</keyword>
<keyword id="KW-0597">Phosphoprotein</keyword>
<keyword id="KW-0600">Photoreceptor protein</keyword>
<keyword id="KW-0675">Receptor</keyword>
<keyword id="KW-1185">Reference proteome</keyword>
<keyword id="KW-0716">Sensory transduction</keyword>
<keyword id="KW-0808">Transferase</keyword>
<keyword id="KW-0843">Virulence</keyword>
<proteinExistence type="evidence at protein level"/>